<feature type="chain" id="PRO_0000178998" description="GTPase Der">
    <location>
        <begin position="1"/>
        <end position="504"/>
    </location>
</feature>
<feature type="domain" description="EngA-type G 1">
    <location>
        <begin position="4"/>
        <end position="168"/>
    </location>
</feature>
<feature type="domain" description="EngA-type G 2">
    <location>
        <begin position="216"/>
        <end position="389"/>
    </location>
</feature>
<feature type="domain" description="KH-like" evidence="1">
    <location>
        <begin position="390"/>
        <end position="474"/>
    </location>
</feature>
<feature type="region of interest" description="Disordered" evidence="2">
    <location>
        <begin position="168"/>
        <end position="191"/>
    </location>
</feature>
<feature type="compositionally biased region" description="Basic and acidic residues" evidence="2">
    <location>
        <begin position="168"/>
        <end position="179"/>
    </location>
</feature>
<feature type="compositionally biased region" description="Acidic residues" evidence="2">
    <location>
        <begin position="180"/>
        <end position="191"/>
    </location>
</feature>
<feature type="binding site" evidence="1">
    <location>
        <begin position="10"/>
        <end position="17"/>
    </location>
    <ligand>
        <name>GTP</name>
        <dbReference type="ChEBI" id="CHEBI:37565"/>
        <label>1</label>
    </ligand>
</feature>
<feature type="binding site" evidence="1">
    <location>
        <begin position="57"/>
        <end position="61"/>
    </location>
    <ligand>
        <name>GTP</name>
        <dbReference type="ChEBI" id="CHEBI:37565"/>
        <label>1</label>
    </ligand>
</feature>
<feature type="binding site" evidence="1">
    <location>
        <begin position="120"/>
        <end position="123"/>
    </location>
    <ligand>
        <name>GTP</name>
        <dbReference type="ChEBI" id="CHEBI:37565"/>
        <label>1</label>
    </ligand>
</feature>
<feature type="binding site" evidence="1">
    <location>
        <begin position="222"/>
        <end position="229"/>
    </location>
    <ligand>
        <name>GTP</name>
        <dbReference type="ChEBI" id="CHEBI:37565"/>
        <label>2</label>
    </ligand>
</feature>
<feature type="binding site" evidence="1">
    <location>
        <begin position="269"/>
        <end position="273"/>
    </location>
    <ligand>
        <name>GTP</name>
        <dbReference type="ChEBI" id="CHEBI:37565"/>
        <label>2</label>
    </ligand>
</feature>
<feature type="binding site" evidence="1">
    <location>
        <begin position="334"/>
        <end position="337"/>
    </location>
    <ligand>
        <name>GTP</name>
        <dbReference type="ChEBI" id="CHEBI:37565"/>
        <label>2</label>
    </ligand>
</feature>
<dbReference type="EMBL" id="L42023">
    <property type="protein sequence ID" value="AAC21807.1"/>
    <property type="molecule type" value="Genomic_DNA"/>
</dbReference>
<dbReference type="PIR" id="F64143">
    <property type="entry name" value="F64143"/>
</dbReference>
<dbReference type="RefSeq" id="NP_438305.1">
    <property type="nucleotide sequence ID" value="NC_000907.1"/>
</dbReference>
<dbReference type="SMR" id="P44536"/>
<dbReference type="STRING" id="71421.HI_0136"/>
<dbReference type="EnsemblBacteria" id="AAC21807">
    <property type="protein sequence ID" value="AAC21807"/>
    <property type="gene ID" value="HI_0136"/>
</dbReference>
<dbReference type="KEGG" id="hin:HI_0136"/>
<dbReference type="PATRIC" id="fig|71421.8.peg.138"/>
<dbReference type="eggNOG" id="COG1160">
    <property type="taxonomic scope" value="Bacteria"/>
</dbReference>
<dbReference type="HOGENOM" id="CLU_016077_5_1_6"/>
<dbReference type="OrthoDB" id="9805918at2"/>
<dbReference type="PhylomeDB" id="P44536"/>
<dbReference type="BioCyc" id="HINF71421:G1GJ1-146-MONOMER"/>
<dbReference type="Proteomes" id="UP000000579">
    <property type="component" value="Chromosome"/>
</dbReference>
<dbReference type="GO" id="GO:0016887">
    <property type="term" value="F:ATP hydrolysis activity"/>
    <property type="evidence" value="ECO:0007669"/>
    <property type="project" value="InterPro"/>
</dbReference>
<dbReference type="GO" id="GO:0005525">
    <property type="term" value="F:GTP binding"/>
    <property type="evidence" value="ECO:0007669"/>
    <property type="project" value="UniProtKB-UniRule"/>
</dbReference>
<dbReference type="GO" id="GO:0043022">
    <property type="term" value="F:ribosome binding"/>
    <property type="evidence" value="ECO:0000318"/>
    <property type="project" value="GO_Central"/>
</dbReference>
<dbReference type="GO" id="GO:0042254">
    <property type="term" value="P:ribosome biogenesis"/>
    <property type="evidence" value="ECO:0007669"/>
    <property type="project" value="UniProtKB-KW"/>
</dbReference>
<dbReference type="CDD" id="cd01894">
    <property type="entry name" value="EngA1"/>
    <property type="match status" value="1"/>
</dbReference>
<dbReference type="CDD" id="cd01895">
    <property type="entry name" value="EngA2"/>
    <property type="match status" value="1"/>
</dbReference>
<dbReference type="FunFam" id="3.30.300.20:FF:000004">
    <property type="entry name" value="GTPase Der"/>
    <property type="match status" value="1"/>
</dbReference>
<dbReference type="FunFam" id="3.40.50.300:FF:000040">
    <property type="entry name" value="GTPase Der"/>
    <property type="match status" value="1"/>
</dbReference>
<dbReference type="FunFam" id="3.40.50.300:FF:000057">
    <property type="entry name" value="GTPase Der"/>
    <property type="match status" value="1"/>
</dbReference>
<dbReference type="Gene3D" id="3.30.300.20">
    <property type="match status" value="1"/>
</dbReference>
<dbReference type="Gene3D" id="3.40.50.300">
    <property type="entry name" value="P-loop containing nucleotide triphosphate hydrolases"/>
    <property type="match status" value="2"/>
</dbReference>
<dbReference type="HAMAP" id="MF_00195">
    <property type="entry name" value="GTPase_Der"/>
    <property type="match status" value="1"/>
</dbReference>
<dbReference type="InterPro" id="IPR003593">
    <property type="entry name" value="AAA+_ATPase"/>
</dbReference>
<dbReference type="InterPro" id="IPR031166">
    <property type="entry name" value="G_ENGA"/>
</dbReference>
<dbReference type="InterPro" id="IPR006073">
    <property type="entry name" value="GTP-bd"/>
</dbReference>
<dbReference type="InterPro" id="IPR016484">
    <property type="entry name" value="GTPase_Der"/>
</dbReference>
<dbReference type="InterPro" id="IPR032859">
    <property type="entry name" value="KH_dom-like"/>
</dbReference>
<dbReference type="InterPro" id="IPR015946">
    <property type="entry name" value="KH_dom-like_a/b"/>
</dbReference>
<dbReference type="InterPro" id="IPR027417">
    <property type="entry name" value="P-loop_NTPase"/>
</dbReference>
<dbReference type="InterPro" id="IPR005225">
    <property type="entry name" value="Small_GTP-bd"/>
</dbReference>
<dbReference type="NCBIfam" id="TIGR03594">
    <property type="entry name" value="GTPase_EngA"/>
    <property type="match status" value="1"/>
</dbReference>
<dbReference type="NCBIfam" id="TIGR00231">
    <property type="entry name" value="small_GTP"/>
    <property type="match status" value="2"/>
</dbReference>
<dbReference type="PANTHER" id="PTHR43834">
    <property type="entry name" value="GTPASE DER"/>
    <property type="match status" value="1"/>
</dbReference>
<dbReference type="PANTHER" id="PTHR43834:SF6">
    <property type="entry name" value="GTPASE DER"/>
    <property type="match status" value="1"/>
</dbReference>
<dbReference type="Pfam" id="PF14714">
    <property type="entry name" value="KH_dom-like"/>
    <property type="match status" value="1"/>
</dbReference>
<dbReference type="Pfam" id="PF01926">
    <property type="entry name" value="MMR_HSR1"/>
    <property type="match status" value="2"/>
</dbReference>
<dbReference type="PIRSF" id="PIRSF006485">
    <property type="entry name" value="GTP-binding_EngA"/>
    <property type="match status" value="1"/>
</dbReference>
<dbReference type="PRINTS" id="PR00326">
    <property type="entry name" value="GTP1OBG"/>
</dbReference>
<dbReference type="SMART" id="SM00382">
    <property type="entry name" value="AAA"/>
    <property type="match status" value="2"/>
</dbReference>
<dbReference type="SUPFAM" id="SSF52540">
    <property type="entry name" value="P-loop containing nucleoside triphosphate hydrolases"/>
    <property type="match status" value="2"/>
</dbReference>
<dbReference type="PROSITE" id="PS51712">
    <property type="entry name" value="G_ENGA"/>
    <property type="match status" value="2"/>
</dbReference>
<gene>
    <name evidence="1" type="primary">der</name>
    <name type="synonym">engA</name>
    <name type="ordered locus">HI_0136</name>
</gene>
<name>DER_HAEIN</name>
<organism>
    <name type="scientific">Haemophilus influenzae (strain ATCC 51907 / DSM 11121 / KW20 / Rd)</name>
    <dbReference type="NCBI Taxonomy" id="71421"/>
    <lineage>
        <taxon>Bacteria</taxon>
        <taxon>Pseudomonadati</taxon>
        <taxon>Pseudomonadota</taxon>
        <taxon>Gammaproteobacteria</taxon>
        <taxon>Pasteurellales</taxon>
        <taxon>Pasteurellaceae</taxon>
        <taxon>Haemophilus</taxon>
    </lineage>
</organism>
<proteinExistence type="inferred from homology"/>
<sequence length="504" mass="56437">MATPVVALVGRPNVGKSTLFNRLTRTRDALVADFPGLTRDRKYGHAHIAGYDFIVIDTGGIDGTEEGVEEKMAEQSLLAIDEADIVLFLVDARAGLTAADIGIANYLRQRQNKITVVVANKTDGIDADSHCAEFYQLGLGEIEQIAASQGRGVTQLMEQVLAPFAEKMENADENDRTSEEEQDEWEQEFDFDSEEDTALIDDALDEELEEEQDKNIKIAIVGRPNVGKSTLTNRILGEDRVVVFDMPGTTRDSIYIPMERDGQQYTLIDTAGVRKRGKVHLAVEKFSVIKTLQAIQDANVVLLTIDARENISDQDLSLLGFILNAGRSLVIVVNKWDGLDQDVKDRVKSELDRRLDFIDFARVHFISALHGSGVGNLFDSIKEAYACATQKMTTSLLTRILQMATDEHQPPMIGGRRIKLKYAHPGGYNPPIIVVHGNQMDKLPDSYKRYLSNYYRKSLKIIGSPIRLLFQEGSNPFAGRKNKLTPNQLRKRKRLMKFIKKAKR</sequence>
<accession>P44536</accession>
<keyword id="KW-0342">GTP-binding</keyword>
<keyword id="KW-0547">Nucleotide-binding</keyword>
<keyword id="KW-1185">Reference proteome</keyword>
<keyword id="KW-0677">Repeat</keyword>
<keyword id="KW-0690">Ribosome biogenesis</keyword>
<protein>
    <recommendedName>
        <fullName evidence="1">GTPase Der</fullName>
    </recommendedName>
    <alternativeName>
        <fullName evidence="1">GTP-binding protein EngA</fullName>
    </alternativeName>
</protein>
<comment type="function">
    <text evidence="1">GTPase that plays an essential role in the late steps of ribosome biogenesis.</text>
</comment>
<comment type="subunit">
    <text evidence="1">Associates with the 50S ribosomal subunit.</text>
</comment>
<comment type="similarity">
    <text evidence="1">Belongs to the TRAFAC class TrmE-Era-EngA-EngB-Septin-like GTPase superfamily. EngA (Der) GTPase family.</text>
</comment>
<reference key="1">
    <citation type="journal article" date="1995" name="Science">
        <title>Whole-genome random sequencing and assembly of Haemophilus influenzae Rd.</title>
        <authorList>
            <person name="Fleischmann R.D."/>
            <person name="Adams M.D."/>
            <person name="White O."/>
            <person name="Clayton R.A."/>
            <person name="Kirkness E.F."/>
            <person name="Kerlavage A.R."/>
            <person name="Bult C.J."/>
            <person name="Tomb J.-F."/>
            <person name="Dougherty B.A."/>
            <person name="Merrick J.M."/>
            <person name="McKenney K."/>
            <person name="Sutton G.G."/>
            <person name="FitzHugh W."/>
            <person name="Fields C.A."/>
            <person name="Gocayne J.D."/>
            <person name="Scott J.D."/>
            <person name="Shirley R."/>
            <person name="Liu L.-I."/>
            <person name="Glodek A."/>
            <person name="Kelley J.M."/>
            <person name="Weidman J.F."/>
            <person name="Phillips C.A."/>
            <person name="Spriggs T."/>
            <person name="Hedblom E."/>
            <person name="Cotton M.D."/>
            <person name="Utterback T.R."/>
            <person name="Hanna M.C."/>
            <person name="Nguyen D.T."/>
            <person name="Saudek D.M."/>
            <person name="Brandon R.C."/>
            <person name="Fine L.D."/>
            <person name="Fritchman J.L."/>
            <person name="Fuhrmann J.L."/>
            <person name="Geoghagen N.S.M."/>
            <person name="Gnehm C.L."/>
            <person name="McDonald L.A."/>
            <person name="Small K.V."/>
            <person name="Fraser C.M."/>
            <person name="Smith H.O."/>
            <person name="Venter J.C."/>
        </authorList>
    </citation>
    <scope>NUCLEOTIDE SEQUENCE [LARGE SCALE GENOMIC DNA]</scope>
    <source>
        <strain>ATCC 51907 / DSM 11121 / KW20 / Rd</strain>
    </source>
</reference>
<evidence type="ECO:0000255" key="1">
    <source>
        <dbReference type="HAMAP-Rule" id="MF_00195"/>
    </source>
</evidence>
<evidence type="ECO:0000256" key="2">
    <source>
        <dbReference type="SAM" id="MobiDB-lite"/>
    </source>
</evidence>